<keyword id="KW-0963">Cytoplasm</keyword>
<keyword id="KW-0227">DNA damage</keyword>
<keyword id="KW-0233">DNA recombination</keyword>
<keyword id="KW-0234">DNA repair</keyword>
<keyword id="KW-0238">DNA-binding</keyword>
<keyword id="KW-1185">Reference proteome</keyword>
<dbReference type="EMBL" id="CP000482">
    <property type="protein sequence ID" value="ABL00275.1"/>
    <property type="molecule type" value="Genomic_DNA"/>
</dbReference>
<dbReference type="RefSeq" id="WP_011736527.1">
    <property type="nucleotide sequence ID" value="NC_008609.1"/>
</dbReference>
<dbReference type="SMR" id="A1ASF4"/>
<dbReference type="STRING" id="338966.Ppro_2671"/>
<dbReference type="KEGG" id="ppd:Ppro_2671"/>
<dbReference type="eggNOG" id="COG0632">
    <property type="taxonomic scope" value="Bacteria"/>
</dbReference>
<dbReference type="HOGENOM" id="CLU_087936_3_0_7"/>
<dbReference type="OrthoDB" id="5293449at2"/>
<dbReference type="Proteomes" id="UP000006732">
    <property type="component" value="Chromosome"/>
</dbReference>
<dbReference type="GO" id="GO:0005737">
    <property type="term" value="C:cytoplasm"/>
    <property type="evidence" value="ECO:0007669"/>
    <property type="project" value="UniProtKB-SubCell"/>
</dbReference>
<dbReference type="GO" id="GO:0009379">
    <property type="term" value="C:Holliday junction helicase complex"/>
    <property type="evidence" value="ECO:0007669"/>
    <property type="project" value="InterPro"/>
</dbReference>
<dbReference type="GO" id="GO:0048476">
    <property type="term" value="C:Holliday junction resolvase complex"/>
    <property type="evidence" value="ECO:0007669"/>
    <property type="project" value="UniProtKB-UniRule"/>
</dbReference>
<dbReference type="GO" id="GO:0005524">
    <property type="term" value="F:ATP binding"/>
    <property type="evidence" value="ECO:0007669"/>
    <property type="project" value="InterPro"/>
</dbReference>
<dbReference type="GO" id="GO:0000400">
    <property type="term" value="F:four-way junction DNA binding"/>
    <property type="evidence" value="ECO:0007669"/>
    <property type="project" value="UniProtKB-UniRule"/>
</dbReference>
<dbReference type="GO" id="GO:0009378">
    <property type="term" value="F:four-way junction helicase activity"/>
    <property type="evidence" value="ECO:0007669"/>
    <property type="project" value="InterPro"/>
</dbReference>
<dbReference type="GO" id="GO:0006310">
    <property type="term" value="P:DNA recombination"/>
    <property type="evidence" value="ECO:0007669"/>
    <property type="project" value="UniProtKB-UniRule"/>
</dbReference>
<dbReference type="GO" id="GO:0006281">
    <property type="term" value="P:DNA repair"/>
    <property type="evidence" value="ECO:0007669"/>
    <property type="project" value="UniProtKB-UniRule"/>
</dbReference>
<dbReference type="CDD" id="cd14332">
    <property type="entry name" value="UBA_RuvA_C"/>
    <property type="match status" value="1"/>
</dbReference>
<dbReference type="Gene3D" id="1.10.150.20">
    <property type="entry name" value="5' to 3' exonuclease, C-terminal subdomain"/>
    <property type="match status" value="1"/>
</dbReference>
<dbReference type="Gene3D" id="1.10.8.10">
    <property type="entry name" value="DNA helicase RuvA subunit, C-terminal domain"/>
    <property type="match status" value="1"/>
</dbReference>
<dbReference type="Gene3D" id="2.40.50.140">
    <property type="entry name" value="Nucleic acid-binding proteins"/>
    <property type="match status" value="1"/>
</dbReference>
<dbReference type="HAMAP" id="MF_00031">
    <property type="entry name" value="DNA_HJ_migration_RuvA"/>
    <property type="match status" value="1"/>
</dbReference>
<dbReference type="InterPro" id="IPR013849">
    <property type="entry name" value="DNA_helicase_Holl-junc_RuvA_I"/>
</dbReference>
<dbReference type="InterPro" id="IPR003583">
    <property type="entry name" value="Hlx-hairpin-Hlx_DNA-bd_motif"/>
</dbReference>
<dbReference type="InterPro" id="IPR012340">
    <property type="entry name" value="NA-bd_OB-fold"/>
</dbReference>
<dbReference type="InterPro" id="IPR000085">
    <property type="entry name" value="RuvA"/>
</dbReference>
<dbReference type="InterPro" id="IPR010994">
    <property type="entry name" value="RuvA_2-like"/>
</dbReference>
<dbReference type="InterPro" id="IPR011114">
    <property type="entry name" value="RuvA_C"/>
</dbReference>
<dbReference type="InterPro" id="IPR036267">
    <property type="entry name" value="RuvA_C_sf"/>
</dbReference>
<dbReference type="NCBIfam" id="TIGR00084">
    <property type="entry name" value="ruvA"/>
    <property type="match status" value="1"/>
</dbReference>
<dbReference type="Pfam" id="PF14520">
    <property type="entry name" value="HHH_5"/>
    <property type="match status" value="1"/>
</dbReference>
<dbReference type="Pfam" id="PF07499">
    <property type="entry name" value="RuvA_C"/>
    <property type="match status" value="1"/>
</dbReference>
<dbReference type="Pfam" id="PF01330">
    <property type="entry name" value="RuvA_N"/>
    <property type="match status" value="1"/>
</dbReference>
<dbReference type="SMART" id="SM00278">
    <property type="entry name" value="HhH1"/>
    <property type="match status" value="2"/>
</dbReference>
<dbReference type="SUPFAM" id="SSF46929">
    <property type="entry name" value="DNA helicase RuvA subunit, C-terminal domain"/>
    <property type="match status" value="1"/>
</dbReference>
<dbReference type="SUPFAM" id="SSF50249">
    <property type="entry name" value="Nucleic acid-binding proteins"/>
    <property type="match status" value="1"/>
</dbReference>
<dbReference type="SUPFAM" id="SSF47781">
    <property type="entry name" value="RuvA domain 2-like"/>
    <property type="match status" value="1"/>
</dbReference>
<sequence>MIALLTGQIAQKSPDHIILDVNGVGYRVQIPFSTYYDLPEEGTVSLHIHTSVREDAIQLYGFRTSLEKSFFQLLLSVSGVGPRLARDILSNIQPAQLAQALGQGDIRMLSAVPGIGKKTAERLVLELKEKVGKLDLSSVVVPEPRQMPEDDLLEDVVSALLNLGYKEPQVRKVLAGLNPGSDASLEGVLKQALKSLMR</sequence>
<accession>A1ASF4</accession>
<organism>
    <name type="scientific">Pelobacter propionicus (strain DSM 2379 / NBRC 103807 / OttBd1)</name>
    <dbReference type="NCBI Taxonomy" id="338966"/>
    <lineage>
        <taxon>Bacteria</taxon>
        <taxon>Pseudomonadati</taxon>
        <taxon>Thermodesulfobacteriota</taxon>
        <taxon>Desulfuromonadia</taxon>
        <taxon>Desulfuromonadales</taxon>
        <taxon>Desulfuromonadaceae</taxon>
        <taxon>Pelobacter</taxon>
    </lineage>
</organism>
<evidence type="ECO:0000255" key="1">
    <source>
        <dbReference type="HAMAP-Rule" id="MF_00031"/>
    </source>
</evidence>
<reference key="1">
    <citation type="submission" date="2006-10" db="EMBL/GenBank/DDBJ databases">
        <title>Complete sequence of chromosome of Pelobacter propionicus DSM 2379.</title>
        <authorList>
            <consortium name="US DOE Joint Genome Institute"/>
            <person name="Copeland A."/>
            <person name="Lucas S."/>
            <person name="Lapidus A."/>
            <person name="Barry K."/>
            <person name="Detter J.C."/>
            <person name="Glavina del Rio T."/>
            <person name="Hammon N."/>
            <person name="Israni S."/>
            <person name="Dalin E."/>
            <person name="Tice H."/>
            <person name="Pitluck S."/>
            <person name="Saunders E."/>
            <person name="Brettin T."/>
            <person name="Bruce D."/>
            <person name="Han C."/>
            <person name="Tapia R."/>
            <person name="Schmutz J."/>
            <person name="Larimer F."/>
            <person name="Land M."/>
            <person name="Hauser L."/>
            <person name="Kyrpides N."/>
            <person name="Kim E."/>
            <person name="Lovley D."/>
            <person name="Richardson P."/>
        </authorList>
    </citation>
    <scope>NUCLEOTIDE SEQUENCE [LARGE SCALE GENOMIC DNA]</scope>
    <source>
        <strain>DSM 2379 / NBRC 103807 / OttBd1</strain>
    </source>
</reference>
<protein>
    <recommendedName>
        <fullName evidence="1">Holliday junction branch migration complex subunit RuvA</fullName>
    </recommendedName>
</protein>
<gene>
    <name evidence="1" type="primary">ruvA</name>
    <name type="ordered locus">Ppro_2671</name>
</gene>
<proteinExistence type="inferred from homology"/>
<feature type="chain" id="PRO_1000002510" description="Holliday junction branch migration complex subunit RuvA">
    <location>
        <begin position="1"/>
        <end position="198"/>
    </location>
</feature>
<feature type="region of interest" description="Domain I" evidence="1">
    <location>
        <begin position="1"/>
        <end position="63"/>
    </location>
</feature>
<feature type="region of interest" description="Domain II" evidence="1">
    <location>
        <begin position="64"/>
        <end position="142"/>
    </location>
</feature>
<feature type="region of interest" description="Flexible linker" evidence="1">
    <location>
        <begin position="143"/>
        <end position="153"/>
    </location>
</feature>
<feature type="region of interest" description="Domain III" evidence="1">
    <location>
        <begin position="153"/>
        <end position="198"/>
    </location>
</feature>
<name>RUVA_PELPD</name>
<comment type="function">
    <text evidence="1">The RuvA-RuvB-RuvC complex processes Holliday junction (HJ) DNA during genetic recombination and DNA repair, while the RuvA-RuvB complex plays an important role in the rescue of blocked DNA replication forks via replication fork reversal (RFR). RuvA specifically binds to HJ cruciform DNA, conferring on it an open structure. The RuvB hexamer acts as an ATP-dependent pump, pulling dsDNA into and through the RuvAB complex. HJ branch migration allows RuvC to scan DNA until it finds its consensus sequence, where it cleaves and resolves the cruciform DNA.</text>
</comment>
<comment type="subunit">
    <text evidence="1">Homotetramer. Forms an RuvA(8)-RuvB(12)-Holliday junction (HJ) complex. HJ DNA is sandwiched between 2 RuvA tetramers; dsDNA enters through RuvA and exits via RuvB. An RuvB hexamer assembles on each DNA strand where it exits the tetramer. Each RuvB hexamer is contacted by two RuvA subunits (via domain III) on 2 adjacent RuvB subunits; this complex drives branch migration. In the full resolvosome a probable DNA-RuvA(4)-RuvB(12)-RuvC(2) complex forms which resolves the HJ.</text>
</comment>
<comment type="subcellular location">
    <subcellularLocation>
        <location evidence="1">Cytoplasm</location>
    </subcellularLocation>
</comment>
<comment type="domain">
    <text evidence="1">Has three domains with a flexible linker between the domains II and III and assumes an 'L' shape. Domain III is highly mobile and contacts RuvB.</text>
</comment>
<comment type="similarity">
    <text evidence="1">Belongs to the RuvA family.</text>
</comment>